<keyword id="KW-0067">ATP-binding</keyword>
<keyword id="KW-0413">Isomerase</keyword>
<keyword id="KW-0456">Lyase</keyword>
<keyword id="KW-0479">Metal-binding</keyword>
<keyword id="KW-0511">Multifunctional enzyme</keyword>
<keyword id="KW-0520">NAD</keyword>
<keyword id="KW-0521">NADP</keyword>
<keyword id="KW-0547">Nucleotide-binding</keyword>
<keyword id="KW-0630">Potassium</keyword>
<keyword id="KW-1185">Reference proteome</keyword>
<comment type="function">
    <text evidence="1">Bifunctional enzyme that catalyzes the epimerization of the S- and R-forms of NAD(P)HX and the dehydration of the S-form of NAD(P)HX at the expense of ADP, which is converted to AMP. This allows the repair of both epimers of NAD(P)HX, a damaged form of NAD(P)H that is a result of enzymatic or heat-dependent hydration (By similarity).</text>
</comment>
<comment type="catalytic activity">
    <reaction>
        <text>(6S)-NADHX + ADP = AMP + phosphate + NADH + H(+)</text>
        <dbReference type="Rhea" id="RHEA:32223"/>
        <dbReference type="ChEBI" id="CHEBI:15378"/>
        <dbReference type="ChEBI" id="CHEBI:43474"/>
        <dbReference type="ChEBI" id="CHEBI:57945"/>
        <dbReference type="ChEBI" id="CHEBI:64074"/>
        <dbReference type="ChEBI" id="CHEBI:456215"/>
        <dbReference type="ChEBI" id="CHEBI:456216"/>
        <dbReference type="EC" id="4.2.1.136"/>
    </reaction>
</comment>
<comment type="catalytic activity">
    <reaction>
        <text>(6S)-NADPHX + ADP = AMP + phosphate + NADPH + H(+)</text>
        <dbReference type="Rhea" id="RHEA:32235"/>
        <dbReference type="ChEBI" id="CHEBI:15378"/>
        <dbReference type="ChEBI" id="CHEBI:43474"/>
        <dbReference type="ChEBI" id="CHEBI:57783"/>
        <dbReference type="ChEBI" id="CHEBI:64076"/>
        <dbReference type="ChEBI" id="CHEBI:456215"/>
        <dbReference type="ChEBI" id="CHEBI:456216"/>
        <dbReference type="EC" id="4.2.1.136"/>
    </reaction>
</comment>
<comment type="catalytic activity">
    <reaction>
        <text>(6R)-NADHX = (6S)-NADHX</text>
        <dbReference type="Rhea" id="RHEA:32215"/>
        <dbReference type="ChEBI" id="CHEBI:64074"/>
        <dbReference type="ChEBI" id="CHEBI:64075"/>
        <dbReference type="EC" id="5.1.99.6"/>
    </reaction>
</comment>
<comment type="catalytic activity">
    <reaction>
        <text>(6R)-NADPHX = (6S)-NADPHX</text>
        <dbReference type="Rhea" id="RHEA:32227"/>
        <dbReference type="ChEBI" id="CHEBI:64076"/>
        <dbReference type="ChEBI" id="CHEBI:64077"/>
        <dbReference type="EC" id="5.1.99.6"/>
    </reaction>
</comment>
<comment type="cofactor">
    <cofactor evidence="1">
        <name>K(+)</name>
        <dbReference type="ChEBI" id="CHEBI:29103"/>
    </cofactor>
    <text evidence="1">Binds 1 potassium ion per subunit.</text>
</comment>
<comment type="similarity">
    <text evidence="2">In the N-terminal section; belongs to the NnrE/AIBP family.</text>
</comment>
<comment type="similarity">
    <text evidence="2">In the C-terminal section; belongs to the NnrD/CARKD family.</text>
</comment>
<name>NNR_CORGL</name>
<organism>
    <name type="scientific">Corynebacterium glutamicum (strain ATCC 13032 / DSM 20300 / JCM 1318 / BCRC 11384 / CCUG 27702 / LMG 3730 / NBRC 12168 / NCIMB 10025 / NRRL B-2784 / 534)</name>
    <dbReference type="NCBI Taxonomy" id="196627"/>
    <lineage>
        <taxon>Bacteria</taxon>
        <taxon>Bacillati</taxon>
        <taxon>Actinomycetota</taxon>
        <taxon>Actinomycetes</taxon>
        <taxon>Mycobacteriales</taxon>
        <taxon>Corynebacteriaceae</taxon>
        <taxon>Corynebacterium</taxon>
    </lineage>
</organism>
<reference key="1">
    <citation type="journal article" date="2003" name="J. Biotechnol.">
        <title>The complete Corynebacterium glutamicum ATCC 13032 genome sequence and its impact on the production of L-aspartate-derived amino acids and vitamins.</title>
        <authorList>
            <person name="Kalinowski J."/>
            <person name="Bathe B."/>
            <person name="Bartels D."/>
            <person name="Bischoff N."/>
            <person name="Bott M."/>
            <person name="Burkovski A."/>
            <person name="Dusch N."/>
            <person name="Eggeling L."/>
            <person name="Eikmanns B.J."/>
            <person name="Gaigalat L."/>
            <person name="Goesmann A."/>
            <person name="Hartmann M."/>
            <person name="Huthmacher K."/>
            <person name="Kraemer R."/>
            <person name="Linke B."/>
            <person name="McHardy A.C."/>
            <person name="Meyer F."/>
            <person name="Moeckel B."/>
            <person name="Pfefferle W."/>
            <person name="Puehler A."/>
            <person name="Rey D.A."/>
            <person name="Rueckert C."/>
            <person name="Rupp O."/>
            <person name="Sahm H."/>
            <person name="Wendisch V.F."/>
            <person name="Wiegraebe I."/>
            <person name="Tauch A."/>
        </authorList>
    </citation>
    <scope>NUCLEOTIDE SEQUENCE [LARGE SCALE GENOMIC DNA]</scope>
    <source>
        <strain>ATCC 13032 / DSM 20300 / JCM 1318 / BCRC 11384 / CCUG 27702 / LMG 3730 / NBRC 12168 / NCIMB 10025 / NRRL B-2784 / 534</strain>
    </source>
</reference>
<reference key="2">
    <citation type="journal article" date="2003" name="Appl. Microbiol. Biotechnol.">
        <title>The Corynebacterium glutamicum genome: features and impacts on biotechnological processes.</title>
        <authorList>
            <person name="Ikeda M."/>
            <person name="Nakagawa S."/>
        </authorList>
    </citation>
    <scope>NUCLEOTIDE SEQUENCE [LARGE SCALE GENOMIC DNA]</scope>
    <source>
        <strain>ATCC 13032 / DSM 20300 / JCM 1318 / BCRC 11384 / CCUG 27702 / LMG 3730 / NBRC 12168 / NCIMB 10025 / NRRL B-2784 / 534</strain>
    </source>
</reference>
<dbReference type="EC" id="4.2.1.136"/>
<dbReference type="EC" id="5.1.99.6"/>
<dbReference type="EMBL" id="BA000036">
    <property type="protein sequence ID" value="BAB97988.1"/>
    <property type="molecule type" value="Genomic_DNA"/>
</dbReference>
<dbReference type="EMBL" id="BX927149">
    <property type="protein sequence ID" value="CAF19300.1"/>
    <property type="molecule type" value="Genomic_DNA"/>
</dbReference>
<dbReference type="RefSeq" id="NP_599831.1">
    <property type="nucleotide sequence ID" value="NC_003450.3"/>
</dbReference>
<dbReference type="RefSeq" id="WP_011013753.1">
    <property type="nucleotide sequence ID" value="NC_006958.1"/>
</dbReference>
<dbReference type="SMR" id="Q8NSS3"/>
<dbReference type="STRING" id="196627.cg0688"/>
<dbReference type="KEGG" id="cgb:cg0688"/>
<dbReference type="KEGG" id="cgl:Cgl0595"/>
<dbReference type="PATRIC" id="fig|196627.13.peg.586"/>
<dbReference type="eggNOG" id="COG0062">
    <property type="taxonomic scope" value="Bacteria"/>
</dbReference>
<dbReference type="eggNOG" id="COG0063">
    <property type="taxonomic scope" value="Bacteria"/>
</dbReference>
<dbReference type="HOGENOM" id="CLU_024853_4_0_11"/>
<dbReference type="OrthoDB" id="9806925at2"/>
<dbReference type="BioCyc" id="CORYNE:G18NG-10157-MONOMER"/>
<dbReference type="Proteomes" id="UP000000582">
    <property type="component" value="Chromosome"/>
</dbReference>
<dbReference type="Proteomes" id="UP000001009">
    <property type="component" value="Chromosome"/>
</dbReference>
<dbReference type="GO" id="GO:0052855">
    <property type="term" value="F:ADP-dependent NAD(P)H-hydrate dehydratase activity"/>
    <property type="evidence" value="ECO:0007669"/>
    <property type="project" value="UniProtKB-UniRule"/>
</dbReference>
<dbReference type="GO" id="GO:0005524">
    <property type="term" value="F:ATP binding"/>
    <property type="evidence" value="ECO:0007669"/>
    <property type="project" value="UniProtKB-KW"/>
</dbReference>
<dbReference type="GO" id="GO:0046872">
    <property type="term" value="F:metal ion binding"/>
    <property type="evidence" value="ECO:0007669"/>
    <property type="project" value="UniProtKB-KW"/>
</dbReference>
<dbReference type="GO" id="GO:0052856">
    <property type="term" value="F:NAD(P)HX epimerase activity"/>
    <property type="evidence" value="ECO:0007669"/>
    <property type="project" value="UniProtKB-UniRule"/>
</dbReference>
<dbReference type="GO" id="GO:0110051">
    <property type="term" value="P:metabolite repair"/>
    <property type="evidence" value="ECO:0007669"/>
    <property type="project" value="TreeGrafter"/>
</dbReference>
<dbReference type="GO" id="GO:0046496">
    <property type="term" value="P:nicotinamide nucleotide metabolic process"/>
    <property type="evidence" value="ECO:0007669"/>
    <property type="project" value="UniProtKB-UniRule"/>
</dbReference>
<dbReference type="CDD" id="cd01171">
    <property type="entry name" value="YXKO-related"/>
    <property type="match status" value="1"/>
</dbReference>
<dbReference type="Gene3D" id="3.40.1190.20">
    <property type="match status" value="1"/>
</dbReference>
<dbReference type="Gene3D" id="3.40.50.10260">
    <property type="entry name" value="YjeF N-terminal domain"/>
    <property type="match status" value="1"/>
</dbReference>
<dbReference type="HAMAP" id="MF_01965">
    <property type="entry name" value="NADHX_dehydratase"/>
    <property type="match status" value="1"/>
</dbReference>
<dbReference type="HAMAP" id="MF_01966">
    <property type="entry name" value="NADHX_epimerase"/>
    <property type="match status" value="1"/>
</dbReference>
<dbReference type="InterPro" id="IPR000631">
    <property type="entry name" value="CARKD"/>
</dbReference>
<dbReference type="InterPro" id="IPR030677">
    <property type="entry name" value="Nnr"/>
</dbReference>
<dbReference type="InterPro" id="IPR029056">
    <property type="entry name" value="Ribokinase-like"/>
</dbReference>
<dbReference type="InterPro" id="IPR004443">
    <property type="entry name" value="YjeF_N_dom"/>
</dbReference>
<dbReference type="InterPro" id="IPR036652">
    <property type="entry name" value="YjeF_N_dom_sf"/>
</dbReference>
<dbReference type="PANTHER" id="PTHR12592:SF0">
    <property type="entry name" value="ATP-DEPENDENT (S)-NAD(P)H-HYDRATE DEHYDRATASE"/>
    <property type="match status" value="1"/>
</dbReference>
<dbReference type="PANTHER" id="PTHR12592">
    <property type="entry name" value="ATP-DEPENDENT (S)-NAD(P)H-HYDRATE DEHYDRATASE FAMILY MEMBER"/>
    <property type="match status" value="1"/>
</dbReference>
<dbReference type="Pfam" id="PF01256">
    <property type="entry name" value="Carb_kinase"/>
    <property type="match status" value="1"/>
</dbReference>
<dbReference type="Pfam" id="PF03853">
    <property type="entry name" value="YjeF_N"/>
    <property type="match status" value="1"/>
</dbReference>
<dbReference type="PIRSF" id="PIRSF017184">
    <property type="entry name" value="Nnr"/>
    <property type="match status" value="1"/>
</dbReference>
<dbReference type="SUPFAM" id="SSF53613">
    <property type="entry name" value="Ribokinase-like"/>
    <property type="match status" value="1"/>
</dbReference>
<dbReference type="SUPFAM" id="SSF64153">
    <property type="entry name" value="YjeF N-terminal domain-like"/>
    <property type="match status" value="1"/>
</dbReference>
<dbReference type="PROSITE" id="PS51383">
    <property type="entry name" value="YJEF_C_3"/>
    <property type="match status" value="1"/>
</dbReference>
<dbReference type="PROSITE" id="PS51385">
    <property type="entry name" value="YJEF_N"/>
    <property type="match status" value="1"/>
</dbReference>
<evidence type="ECO:0000250" key="1"/>
<evidence type="ECO:0000305" key="2"/>
<gene>
    <name type="primary">nnr</name>
    <name type="ordered locus">Cgl0595</name>
    <name type="ordered locus">cg0688</name>
</gene>
<sequence length="574" mass="59796">MKPVFSVDQIRRAENTLFELQADPDELMISAASAVADVALAMVDGPAPAVSSEESILLLVGPGGNGGDALYAGAFLAEEGHHVDALLLGNGKVHQSALAYYESLGGQIISDFPPHYLYRLVIDGLFGIGGRGGLTPELASLVESFSASGIPILAIDVPSGVHADSGELPPGVMVTVEGFDNDAPMARQKIPAHIDADVTITFGGLRRAHAVSPACGEVLCADINIAGGGGKSLSAELSQVQAEDATPQMFASKAYQRKDSLFERANLKATAPHIHRIGQHFTVLNMEPGPDHDKYSGGIVGIVAGSGTYPGAAVLSVKAAVRATSAMVRYVGPALNFVIQSLPEVVATQSLATAGRVQAWVHGPGRGLEAEQSAELAELLSRPEPVLIDADSLSLLQLSAELRQALRERKAPTVLTPHKGEFERIAAELRSEGVEIPQADKDPIGAAQALAKEFDCCVLLKGKYTVIAAHDFVHAINAGHSWLATPGSGDVLSGLVGAHLAQSYAELNRLPEFFPDVTLSDSAIYTQIAPAATIHAVAAGLAARTEFGFAPTSASLIADAIPAATAKVDLKRIV</sequence>
<proteinExistence type="inferred from homology"/>
<protein>
    <recommendedName>
        <fullName>Bifunctional NAD(P)H-hydrate repair enzyme Nnr</fullName>
    </recommendedName>
    <alternativeName>
        <fullName>Nicotinamide nucleotide repair protein</fullName>
    </alternativeName>
    <domain>
        <recommendedName>
            <fullName>ADP-dependent (S)-NAD(P)H-hydrate dehydratase</fullName>
            <ecNumber>4.2.1.136</ecNumber>
        </recommendedName>
        <alternativeName>
            <fullName>ADP-dependent NAD(P)HX dehydratase</fullName>
        </alternativeName>
    </domain>
    <domain>
        <recommendedName>
            <fullName>NAD(P)H-hydrate epimerase</fullName>
            <ecNumber>5.1.99.6</ecNumber>
        </recommendedName>
        <alternativeName>
            <fullName>NAD(P)HX epimerase</fullName>
        </alternativeName>
    </domain>
</protein>
<feature type="chain" id="PRO_0000416415" description="Bifunctional NAD(P)H-hydrate repair enzyme Nnr">
    <location>
        <begin position="1"/>
        <end position="574"/>
    </location>
</feature>
<feature type="domain" description="YjeF N-terminal">
    <location>
        <begin position="10"/>
        <end position="231"/>
    </location>
</feature>
<feature type="domain" description="YjeF C-terminal">
    <location>
        <begin position="277"/>
        <end position="568"/>
    </location>
</feature>
<feature type="region of interest" description="NAD(P)H-hydrate epimerase" evidence="1">
    <location>
        <begin position="1"/>
        <end position="269"/>
    </location>
</feature>
<feature type="region of interest" description="NADPHX 1; for epimerase activity" evidence="1">
    <location>
        <begin position="64"/>
        <end position="68"/>
    </location>
</feature>
<feature type="region of interest" description="NADPHX 1; for epimerase activity" evidence="1">
    <location>
        <begin position="127"/>
        <end position="133"/>
    </location>
</feature>
<feature type="region of interest" description="ADP-dependent (S)-NAD(P)H-hydrate dehydratase" evidence="1">
    <location>
        <begin position="277"/>
        <end position="574"/>
    </location>
</feature>
<feature type="region of interest" description="NADPHX 2; for dehydratase activity" evidence="1">
    <location>
        <begin position="418"/>
        <end position="424"/>
    </location>
</feature>
<feature type="binding site" evidence="1">
    <location>
        <position position="65"/>
    </location>
    <ligand>
        <name>K(+)</name>
        <dbReference type="ChEBI" id="CHEBI:29103"/>
    </ligand>
</feature>
<feature type="binding site" evidence="1">
    <location>
        <position position="123"/>
    </location>
    <ligand>
        <name>K(+)</name>
        <dbReference type="ChEBI" id="CHEBI:29103"/>
    </ligand>
</feature>
<feature type="binding site" evidence="1">
    <location>
        <position position="156"/>
    </location>
    <ligand>
        <name>(6S)-NADPHX</name>
        <dbReference type="ChEBI" id="CHEBI:64076"/>
        <label>1</label>
        <note>for epimerase activity</note>
    </ligand>
</feature>
<feature type="binding site" evidence="1">
    <location>
        <position position="159"/>
    </location>
    <ligand>
        <name>K(+)</name>
        <dbReference type="ChEBI" id="CHEBI:29103"/>
    </ligand>
</feature>
<feature type="binding site" evidence="1">
    <location>
        <position position="365"/>
    </location>
    <ligand>
        <name>(6S)-NADPHX</name>
        <dbReference type="ChEBI" id="CHEBI:64076"/>
        <label>2</label>
        <note>for dehydratase activity</note>
    </ligand>
</feature>
<feature type="binding site" evidence="1">
    <location>
        <begin position="461"/>
        <end position="465"/>
    </location>
    <ligand>
        <name>ADP</name>
        <dbReference type="ChEBI" id="CHEBI:456216"/>
    </ligand>
</feature>
<feature type="binding site" evidence="1">
    <location>
        <begin position="480"/>
        <end position="489"/>
    </location>
    <ligand>
        <name>ADP</name>
        <dbReference type="ChEBI" id="CHEBI:456216"/>
    </ligand>
</feature>
<feature type="binding site" evidence="1">
    <location>
        <position position="490"/>
    </location>
    <ligand>
        <name>(6S)-NADPHX</name>
        <dbReference type="ChEBI" id="CHEBI:64076"/>
        <label>2</label>
        <note>for dehydratase activity</note>
    </ligand>
</feature>
<accession>Q8NSS3</accession>
<accession>Q6M7G8</accession>